<organism>
    <name type="scientific">Haemophilus ducreyi (strain 35000HP / ATCC 700724)</name>
    <dbReference type="NCBI Taxonomy" id="233412"/>
    <lineage>
        <taxon>Bacteria</taxon>
        <taxon>Pseudomonadati</taxon>
        <taxon>Pseudomonadota</taxon>
        <taxon>Gammaproteobacteria</taxon>
        <taxon>Pasteurellales</taxon>
        <taxon>Pasteurellaceae</taxon>
        <taxon>Haemophilus</taxon>
    </lineage>
</organism>
<evidence type="ECO:0000255" key="1">
    <source>
        <dbReference type="HAMAP-Rule" id="MF_00318"/>
    </source>
</evidence>
<reference key="1">
    <citation type="submission" date="2003-06" db="EMBL/GenBank/DDBJ databases">
        <title>The complete genome sequence of Haemophilus ducreyi.</title>
        <authorList>
            <person name="Munson R.S. Jr."/>
            <person name="Ray W.C."/>
            <person name="Mahairas G."/>
            <person name="Sabo P."/>
            <person name="Mungur R."/>
            <person name="Johnson L."/>
            <person name="Nguyen D."/>
            <person name="Wang J."/>
            <person name="Forst C."/>
            <person name="Hood L."/>
        </authorList>
    </citation>
    <scope>NUCLEOTIDE SEQUENCE [LARGE SCALE GENOMIC DNA]</scope>
    <source>
        <strain>35000HP / ATCC 700724</strain>
    </source>
</reference>
<feature type="chain" id="PRO_0000133894" description="Enolase">
    <location>
        <begin position="1"/>
        <end position="433"/>
    </location>
</feature>
<feature type="active site" description="Proton donor" evidence="1">
    <location>
        <position position="209"/>
    </location>
</feature>
<feature type="active site" description="Proton acceptor" evidence="1">
    <location>
        <position position="343"/>
    </location>
</feature>
<feature type="binding site" evidence="1">
    <location>
        <position position="167"/>
    </location>
    <ligand>
        <name>(2R)-2-phosphoglycerate</name>
        <dbReference type="ChEBI" id="CHEBI:58289"/>
    </ligand>
</feature>
<feature type="binding site" evidence="1">
    <location>
        <position position="246"/>
    </location>
    <ligand>
        <name>Mg(2+)</name>
        <dbReference type="ChEBI" id="CHEBI:18420"/>
    </ligand>
</feature>
<feature type="binding site" evidence="1">
    <location>
        <position position="291"/>
    </location>
    <ligand>
        <name>Mg(2+)</name>
        <dbReference type="ChEBI" id="CHEBI:18420"/>
    </ligand>
</feature>
<feature type="binding site" evidence="1">
    <location>
        <position position="318"/>
    </location>
    <ligand>
        <name>Mg(2+)</name>
        <dbReference type="ChEBI" id="CHEBI:18420"/>
    </ligand>
</feature>
<feature type="binding site" evidence="1">
    <location>
        <position position="343"/>
    </location>
    <ligand>
        <name>(2R)-2-phosphoglycerate</name>
        <dbReference type="ChEBI" id="CHEBI:58289"/>
    </ligand>
</feature>
<feature type="binding site" evidence="1">
    <location>
        <position position="372"/>
    </location>
    <ligand>
        <name>(2R)-2-phosphoglycerate</name>
        <dbReference type="ChEBI" id="CHEBI:58289"/>
    </ligand>
</feature>
<feature type="binding site" evidence="1">
    <location>
        <position position="373"/>
    </location>
    <ligand>
        <name>(2R)-2-phosphoglycerate</name>
        <dbReference type="ChEBI" id="CHEBI:58289"/>
    </ligand>
</feature>
<feature type="binding site" evidence="1">
    <location>
        <position position="394"/>
    </location>
    <ligand>
        <name>(2R)-2-phosphoglycerate</name>
        <dbReference type="ChEBI" id="CHEBI:58289"/>
    </ligand>
</feature>
<gene>
    <name evidence="1" type="primary">eno</name>
    <name type="ordered locus">HD_0477</name>
</gene>
<name>ENO_HAEDU</name>
<keyword id="KW-0963">Cytoplasm</keyword>
<keyword id="KW-0324">Glycolysis</keyword>
<keyword id="KW-0456">Lyase</keyword>
<keyword id="KW-0460">Magnesium</keyword>
<keyword id="KW-0479">Metal-binding</keyword>
<keyword id="KW-1185">Reference proteome</keyword>
<keyword id="KW-0964">Secreted</keyword>
<protein>
    <recommendedName>
        <fullName evidence="1">Enolase</fullName>
        <ecNumber evidence="1">4.2.1.11</ecNumber>
    </recommendedName>
    <alternativeName>
        <fullName evidence="1">2-phospho-D-glycerate hydro-lyase</fullName>
    </alternativeName>
    <alternativeName>
        <fullName evidence="1">2-phosphoglycerate dehydratase</fullName>
    </alternativeName>
</protein>
<sequence>MAKIVKVIGREIIDSRGNPTVEAEVHLEGGFVGLAAAPSGASTGSREALELRDGDKSRFLGKGVLKAVAAVNNEIAQAIVGKEGCAQSEIDQTMIDLDGTENKSKFGANAILAVSLATAKAAAASKGLPLYAYIAELNGTPGVYSMPLPMMNIINGGEHADNNVDIQEFMIQPIGAKTLREALRIGAEVFHNLAKVLKAKGLSTAVGDEGGFAPNLASNADALACIKEAVENAGYVLGKDITLAMDCASSEFYNKENGLYEMKGEGKSFTSQEFTHYLENLCKEYPIVSIEDGQDESDWDGFAYQTKILGDKVQLVGDDLFVTNTKILKEGIEKGIANSILIKFNQIGSLTETLAAIKMAKDAGYTAVISHRSGETEDATIADLAVGTAAGQIKTGSMSRSDRIAKYNQLIRIEEALGEMAPFLGLKAIKGQA</sequence>
<proteinExistence type="inferred from homology"/>
<dbReference type="EC" id="4.2.1.11" evidence="1"/>
<dbReference type="EMBL" id="AE017143">
    <property type="protein sequence ID" value="AAP95433.1"/>
    <property type="molecule type" value="Genomic_DNA"/>
</dbReference>
<dbReference type="RefSeq" id="WP_010944486.1">
    <property type="nucleotide sequence ID" value="NC_002940.2"/>
</dbReference>
<dbReference type="SMR" id="Q7VNM6"/>
<dbReference type="STRING" id="233412.HD_0477"/>
<dbReference type="KEGG" id="hdu:HD_0477"/>
<dbReference type="eggNOG" id="COG0148">
    <property type="taxonomic scope" value="Bacteria"/>
</dbReference>
<dbReference type="HOGENOM" id="CLU_031223_2_1_6"/>
<dbReference type="OrthoDB" id="9804716at2"/>
<dbReference type="UniPathway" id="UPA00109">
    <property type="reaction ID" value="UER00187"/>
</dbReference>
<dbReference type="Proteomes" id="UP000001022">
    <property type="component" value="Chromosome"/>
</dbReference>
<dbReference type="GO" id="GO:0009986">
    <property type="term" value="C:cell surface"/>
    <property type="evidence" value="ECO:0007669"/>
    <property type="project" value="UniProtKB-SubCell"/>
</dbReference>
<dbReference type="GO" id="GO:0005576">
    <property type="term" value="C:extracellular region"/>
    <property type="evidence" value="ECO:0007669"/>
    <property type="project" value="UniProtKB-SubCell"/>
</dbReference>
<dbReference type="GO" id="GO:0000015">
    <property type="term" value="C:phosphopyruvate hydratase complex"/>
    <property type="evidence" value="ECO:0007669"/>
    <property type="project" value="InterPro"/>
</dbReference>
<dbReference type="GO" id="GO:0000287">
    <property type="term" value="F:magnesium ion binding"/>
    <property type="evidence" value="ECO:0007669"/>
    <property type="project" value="UniProtKB-UniRule"/>
</dbReference>
<dbReference type="GO" id="GO:0004634">
    <property type="term" value="F:phosphopyruvate hydratase activity"/>
    <property type="evidence" value="ECO:0007669"/>
    <property type="project" value="UniProtKB-UniRule"/>
</dbReference>
<dbReference type="GO" id="GO:0006096">
    <property type="term" value="P:glycolytic process"/>
    <property type="evidence" value="ECO:0007669"/>
    <property type="project" value="UniProtKB-UniRule"/>
</dbReference>
<dbReference type="CDD" id="cd03313">
    <property type="entry name" value="enolase"/>
    <property type="match status" value="1"/>
</dbReference>
<dbReference type="FunFam" id="3.20.20.120:FF:000001">
    <property type="entry name" value="Enolase"/>
    <property type="match status" value="1"/>
</dbReference>
<dbReference type="FunFam" id="3.30.390.10:FF:000001">
    <property type="entry name" value="Enolase"/>
    <property type="match status" value="1"/>
</dbReference>
<dbReference type="Gene3D" id="3.20.20.120">
    <property type="entry name" value="Enolase-like C-terminal domain"/>
    <property type="match status" value="1"/>
</dbReference>
<dbReference type="Gene3D" id="3.30.390.10">
    <property type="entry name" value="Enolase-like, N-terminal domain"/>
    <property type="match status" value="1"/>
</dbReference>
<dbReference type="HAMAP" id="MF_00318">
    <property type="entry name" value="Enolase"/>
    <property type="match status" value="1"/>
</dbReference>
<dbReference type="InterPro" id="IPR000941">
    <property type="entry name" value="Enolase"/>
</dbReference>
<dbReference type="InterPro" id="IPR036849">
    <property type="entry name" value="Enolase-like_C_sf"/>
</dbReference>
<dbReference type="InterPro" id="IPR029017">
    <property type="entry name" value="Enolase-like_N"/>
</dbReference>
<dbReference type="InterPro" id="IPR020810">
    <property type="entry name" value="Enolase_C"/>
</dbReference>
<dbReference type="InterPro" id="IPR020809">
    <property type="entry name" value="Enolase_CS"/>
</dbReference>
<dbReference type="InterPro" id="IPR020811">
    <property type="entry name" value="Enolase_N"/>
</dbReference>
<dbReference type="NCBIfam" id="TIGR01060">
    <property type="entry name" value="eno"/>
    <property type="match status" value="1"/>
</dbReference>
<dbReference type="PANTHER" id="PTHR11902">
    <property type="entry name" value="ENOLASE"/>
    <property type="match status" value="1"/>
</dbReference>
<dbReference type="PANTHER" id="PTHR11902:SF1">
    <property type="entry name" value="ENOLASE"/>
    <property type="match status" value="1"/>
</dbReference>
<dbReference type="Pfam" id="PF00113">
    <property type="entry name" value="Enolase_C"/>
    <property type="match status" value="1"/>
</dbReference>
<dbReference type="Pfam" id="PF03952">
    <property type="entry name" value="Enolase_N"/>
    <property type="match status" value="1"/>
</dbReference>
<dbReference type="PIRSF" id="PIRSF001400">
    <property type="entry name" value="Enolase"/>
    <property type="match status" value="1"/>
</dbReference>
<dbReference type="PRINTS" id="PR00148">
    <property type="entry name" value="ENOLASE"/>
</dbReference>
<dbReference type="SFLD" id="SFLDS00001">
    <property type="entry name" value="Enolase"/>
    <property type="match status" value="1"/>
</dbReference>
<dbReference type="SFLD" id="SFLDF00002">
    <property type="entry name" value="enolase"/>
    <property type="match status" value="1"/>
</dbReference>
<dbReference type="SMART" id="SM01192">
    <property type="entry name" value="Enolase_C"/>
    <property type="match status" value="1"/>
</dbReference>
<dbReference type="SMART" id="SM01193">
    <property type="entry name" value="Enolase_N"/>
    <property type="match status" value="1"/>
</dbReference>
<dbReference type="SUPFAM" id="SSF51604">
    <property type="entry name" value="Enolase C-terminal domain-like"/>
    <property type="match status" value="1"/>
</dbReference>
<dbReference type="SUPFAM" id="SSF54826">
    <property type="entry name" value="Enolase N-terminal domain-like"/>
    <property type="match status" value="1"/>
</dbReference>
<dbReference type="PROSITE" id="PS00164">
    <property type="entry name" value="ENOLASE"/>
    <property type="match status" value="1"/>
</dbReference>
<accession>Q7VNM6</accession>
<comment type="function">
    <text evidence="1">Catalyzes the reversible conversion of 2-phosphoglycerate (2-PG) into phosphoenolpyruvate (PEP). It is essential for the degradation of carbohydrates via glycolysis.</text>
</comment>
<comment type="catalytic activity">
    <reaction evidence="1">
        <text>(2R)-2-phosphoglycerate = phosphoenolpyruvate + H2O</text>
        <dbReference type="Rhea" id="RHEA:10164"/>
        <dbReference type="ChEBI" id="CHEBI:15377"/>
        <dbReference type="ChEBI" id="CHEBI:58289"/>
        <dbReference type="ChEBI" id="CHEBI:58702"/>
        <dbReference type="EC" id="4.2.1.11"/>
    </reaction>
</comment>
<comment type="cofactor">
    <cofactor evidence="1">
        <name>Mg(2+)</name>
        <dbReference type="ChEBI" id="CHEBI:18420"/>
    </cofactor>
    <text evidence="1">Binds a second Mg(2+) ion via substrate during catalysis.</text>
</comment>
<comment type="pathway">
    <text evidence="1">Carbohydrate degradation; glycolysis; pyruvate from D-glyceraldehyde 3-phosphate: step 4/5.</text>
</comment>
<comment type="subunit">
    <text evidence="1">Component of the RNA degradosome, a multiprotein complex involved in RNA processing and mRNA degradation.</text>
</comment>
<comment type="subcellular location">
    <subcellularLocation>
        <location evidence="1">Cytoplasm</location>
    </subcellularLocation>
    <subcellularLocation>
        <location evidence="1">Secreted</location>
    </subcellularLocation>
    <subcellularLocation>
        <location evidence="1">Cell surface</location>
    </subcellularLocation>
    <text evidence="1">Fractions of enolase are present in both the cytoplasm and on the cell surface.</text>
</comment>
<comment type="similarity">
    <text evidence="1">Belongs to the enolase family.</text>
</comment>